<reference key="1">
    <citation type="journal article" date="1995" name="Mech. Dev.">
        <title>A Xenopus c-kit-related receptor tyrosine kinase expressed in migrating stem cells of the lateral line system.</title>
        <authorList>
            <person name="Baker C.V.H."/>
            <person name="Sharpe C.R."/>
            <person name="Torpey N.P."/>
            <person name="Heasman J."/>
            <person name="Wylie C.C."/>
        </authorList>
    </citation>
    <scope>NUCLEOTIDE SEQUENCE [MRNA]</scope>
    <scope>DEVELOPMENTAL STAGE</scope>
</reference>
<proteinExistence type="evidence at transcript level"/>
<evidence type="ECO:0000250" key="1"/>
<evidence type="ECO:0000255" key="2"/>
<evidence type="ECO:0000255" key="3">
    <source>
        <dbReference type="PROSITE-ProRule" id="PRU00114"/>
    </source>
</evidence>
<evidence type="ECO:0000255" key="4">
    <source>
        <dbReference type="PROSITE-ProRule" id="PRU00159"/>
    </source>
</evidence>
<evidence type="ECO:0000255" key="5">
    <source>
        <dbReference type="PROSITE-ProRule" id="PRU10028"/>
    </source>
</evidence>
<evidence type="ECO:0000269" key="6">
    <source>
    </source>
</evidence>
<evidence type="ECO:0000305" key="7"/>
<protein>
    <recommendedName>
        <fullName>Mast/stem cell growth factor receptor-related protein Kit</fullName>
        <ecNumber>2.7.10.1</ecNumber>
    </recommendedName>
    <alternativeName>
        <fullName>Kit-related kinase 1</fullName>
        <shortName>xKrk1</shortName>
    </alternativeName>
    <alternativeName>
        <fullName>Tyrosine-protein kinase kit</fullName>
    </alternativeName>
</protein>
<gene>
    <name type="primary">kit</name>
    <name type="synonym">krk1</name>
</gene>
<feature type="signal peptide" evidence="2">
    <location>
        <begin position="1"/>
        <end position="19"/>
    </location>
</feature>
<feature type="chain" id="PRO_0000248274" description="Mast/stem cell growth factor receptor-related protein Kit">
    <location>
        <begin position="20"/>
        <end position="954"/>
    </location>
</feature>
<feature type="topological domain" description="Extracellular" evidence="2">
    <location>
        <begin position="20"/>
        <end position="512"/>
    </location>
</feature>
<feature type="transmembrane region" description="Helical" evidence="2">
    <location>
        <begin position="513"/>
        <end position="533"/>
    </location>
</feature>
<feature type="topological domain" description="Cytoplasmic" evidence="2">
    <location>
        <begin position="534"/>
        <end position="954"/>
    </location>
</feature>
<feature type="domain" description="Ig-like C2-type 1">
    <location>
        <begin position="21"/>
        <end position="109"/>
    </location>
</feature>
<feature type="domain" description="Ig-like C2-type 2">
    <location>
        <begin position="118"/>
        <end position="200"/>
    </location>
</feature>
<feature type="domain" description="Ig-like C2-type 3">
    <location>
        <begin position="207"/>
        <end position="299"/>
    </location>
</feature>
<feature type="domain" description="Ig-like C2-type 4">
    <location>
        <begin position="308"/>
        <end position="401"/>
    </location>
</feature>
<feature type="domain" description="Ig-like C2-type 5">
    <location>
        <begin position="404"/>
        <end position="499"/>
    </location>
</feature>
<feature type="domain" description="Protein kinase" evidence="4">
    <location>
        <begin position="577"/>
        <end position="912"/>
    </location>
</feature>
<feature type="active site" description="Proton acceptor" evidence="4 5">
    <location>
        <position position="776"/>
    </location>
</feature>
<feature type="binding site" evidence="1">
    <location>
        <position position="556"/>
    </location>
    <ligand>
        <name>Mg(2+)</name>
        <dbReference type="ChEBI" id="CHEBI:18420"/>
    </ligand>
</feature>
<feature type="binding site" evidence="4">
    <location>
        <begin position="584"/>
        <end position="591"/>
    </location>
    <ligand>
        <name>ATP</name>
        <dbReference type="ChEBI" id="CHEBI:30616"/>
    </ligand>
</feature>
<feature type="binding site" evidence="4">
    <location>
        <position position="611"/>
    </location>
    <ligand>
        <name>ATP</name>
        <dbReference type="ChEBI" id="CHEBI:30616"/>
    </ligand>
</feature>
<feature type="binding site" evidence="4">
    <location>
        <begin position="659"/>
        <end position="665"/>
    </location>
    <ligand>
        <name>ATP</name>
        <dbReference type="ChEBI" id="CHEBI:30616"/>
    </ligand>
</feature>
<feature type="binding site" evidence="4">
    <location>
        <position position="780"/>
    </location>
    <ligand>
        <name>ATP</name>
        <dbReference type="ChEBI" id="CHEBI:30616"/>
    </ligand>
</feature>
<feature type="binding site" evidence="1">
    <location>
        <position position="781"/>
    </location>
    <ligand>
        <name>Mg(2+)</name>
        <dbReference type="ChEBI" id="CHEBI:18420"/>
    </ligand>
</feature>
<feature type="binding site" evidence="1">
    <location>
        <position position="794"/>
    </location>
    <ligand>
        <name>Mg(2+)</name>
        <dbReference type="ChEBI" id="CHEBI:18420"/>
    </ligand>
</feature>
<feature type="modified residue" description="Phosphotyrosine; by autocatalysis" evidence="1">
    <location>
        <position position="556"/>
    </location>
</feature>
<feature type="modified residue" description="Phosphotyrosine; by autocatalysis" evidence="1">
    <location>
        <position position="558"/>
    </location>
</feature>
<feature type="modified residue" description="Phosphotyrosine; by autocatalysis" evidence="1">
    <location>
        <position position="691"/>
    </location>
</feature>
<feature type="modified residue" description="Phosphotyrosine; by autocatalysis" evidence="1">
    <location>
        <position position="708"/>
    </location>
</feature>
<feature type="modified residue" description="Phosphotyrosine; by autocatalysis" evidence="1">
    <location>
        <position position="807"/>
    </location>
</feature>
<feature type="glycosylation site" description="N-linked (GlcNAc...) asparagine" evidence="2">
    <location>
        <position position="70"/>
    </location>
</feature>
<feature type="glycosylation site" description="N-linked (GlcNAc...) asparagine" evidence="2">
    <location>
        <position position="101"/>
    </location>
</feature>
<feature type="glycosylation site" description="N-linked (GlcNAc...) asparagine" evidence="2">
    <location>
        <position position="155"/>
    </location>
</feature>
<feature type="glycosylation site" description="N-linked (GlcNAc...) asparagine" evidence="2">
    <location>
        <position position="184"/>
    </location>
</feature>
<feature type="glycosylation site" description="N-linked (GlcNAc...) asparagine" evidence="2">
    <location>
        <position position="263"/>
    </location>
</feature>
<feature type="glycosylation site" description="N-linked (GlcNAc...) asparagine" evidence="2">
    <location>
        <position position="291"/>
    </location>
</feature>
<feature type="glycosylation site" description="N-linked (GlcNAc...) asparagine" evidence="2">
    <location>
        <position position="305"/>
    </location>
</feature>
<feature type="glycosylation site" description="N-linked (GlcNAc...) asparagine" evidence="2">
    <location>
        <position position="311"/>
    </location>
</feature>
<feature type="glycosylation site" description="N-linked (GlcNAc...) asparagine" evidence="2">
    <location>
        <position position="343"/>
    </location>
</feature>
<feature type="glycosylation site" description="N-linked (GlcNAc...) asparagine" evidence="2">
    <location>
        <position position="348"/>
    </location>
</feature>
<feature type="glycosylation site" description="N-linked (GlcNAc...) asparagine" evidence="2">
    <location>
        <position position="458"/>
    </location>
</feature>
<feature type="glycosylation site" description="N-linked (GlcNAc...) asparagine" evidence="2">
    <location>
        <position position="478"/>
    </location>
</feature>
<feature type="disulfide bond" evidence="3">
    <location>
        <begin position="42"/>
        <end position="93"/>
    </location>
</feature>
<feature type="disulfide bond" evidence="3">
    <location>
        <begin position="133"/>
        <end position="181"/>
    </location>
</feature>
<feature type="disulfide bond" evidence="3">
    <location>
        <begin position="147"/>
        <end position="178"/>
    </location>
</feature>
<feature type="disulfide bond" evidence="3">
    <location>
        <begin position="228"/>
        <end position="281"/>
    </location>
</feature>
<feature type="disulfide bond" evidence="3">
    <location>
        <begin position="419"/>
        <end position="483"/>
    </location>
</feature>
<accession>Q91909</accession>
<dbReference type="EC" id="2.7.10.1"/>
<dbReference type="EMBL" id="Z48770">
    <property type="protein sequence ID" value="CAA88688.1"/>
    <property type="molecule type" value="mRNA"/>
</dbReference>
<dbReference type="PIR" id="I51703">
    <property type="entry name" value="I51703"/>
</dbReference>
<dbReference type="RefSeq" id="NP_001079048.1">
    <property type="nucleotide sequence ID" value="NM_001085579.1"/>
</dbReference>
<dbReference type="SMR" id="Q91909"/>
<dbReference type="GlyCosmos" id="Q91909">
    <property type="glycosylation" value="12 sites, No reported glycans"/>
</dbReference>
<dbReference type="GeneID" id="373579"/>
<dbReference type="KEGG" id="xla:373579"/>
<dbReference type="AGR" id="Xenbase:XB-GENE-6253062"/>
<dbReference type="CTD" id="373579"/>
<dbReference type="Xenbase" id="XB-GENE-6253062">
    <property type="gene designation" value="kit.L"/>
</dbReference>
<dbReference type="OrthoDB" id="6077854at2759"/>
<dbReference type="Proteomes" id="UP000186698">
    <property type="component" value="Chromosome 1L"/>
</dbReference>
<dbReference type="Bgee" id="373579">
    <property type="expression patterns" value="Expressed in pancreas and 15 other cell types or tissues"/>
</dbReference>
<dbReference type="GO" id="GO:0005886">
    <property type="term" value="C:plasma membrane"/>
    <property type="evidence" value="ECO:0000318"/>
    <property type="project" value="GO_Central"/>
</dbReference>
<dbReference type="GO" id="GO:0043235">
    <property type="term" value="C:receptor complex"/>
    <property type="evidence" value="ECO:0000318"/>
    <property type="project" value="GO_Central"/>
</dbReference>
<dbReference type="GO" id="GO:0005524">
    <property type="term" value="F:ATP binding"/>
    <property type="evidence" value="ECO:0007669"/>
    <property type="project" value="UniProtKB-KW"/>
</dbReference>
<dbReference type="GO" id="GO:0019955">
    <property type="term" value="F:cytokine binding"/>
    <property type="evidence" value="ECO:0007669"/>
    <property type="project" value="InterPro"/>
</dbReference>
<dbReference type="GO" id="GO:0019838">
    <property type="term" value="F:growth factor binding"/>
    <property type="evidence" value="ECO:0000318"/>
    <property type="project" value="GO_Central"/>
</dbReference>
<dbReference type="GO" id="GO:0046872">
    <property type="term" value="F:metal ion binding"/>
    <property type="evidence" value="ECO:0007669"/>
    <property type="project" value="UniProtKB-KW"/>
</dbReference>
<dbReference type="GO" id="GO:0004714">
    <property type="term" value="F:transmembrane receptor protein tyrosine kinase activity"/>
    <property type="evidence" value="ECO:0000318"/>
    <property type="project" value="GO_Central"/>
</dbReference>
<dbReference type="GO" id="GO:0030183">
    <property type="term" value="P:B cell differentiation"/>
    <property type="evidence" value="ECO:0000318"/>
    <property type="project" value="GO_Central"/>
</dbReference>
<dbReference type="GO" id="GO:0016477">
    <property type="term" value="P:cell migration"/>
    <property type="evidence" value="ECO:0000318"/>
    <property type="project" value="GO_Central"/>
</dbReference>
<dbReference type="GO" id="GO:0038093">
    <property type="term" value="P:Fc receptor signaling pathway"/>
    <property type="evidence" value="ECO:0007669"/>
    <property type="project" value="InterPro"/>
</dbReference>
<dbReference type="GO" id="GO:0002244">
    <property type="term" value="P:hematopoietic progenitor cell differentiation"/>
    <property type="evidence" value="ECO:0000318"/>
    <property type="project" value="GO_Central"/>
</dbReference>
<dbReference type="GO" id="GO:0038109">
    <property type="term" value="P:Kit signaling pathway"/>
    <property type="evidence" value="ECO:0000318"/>
    <property type="project" value="GO_Central"/>
</dbReference>
<dbReference type="GO" id="GO:0030335">
    <property type="term" value="P:positive regulation of cell migration"/>
    <property type="evidence" value="ECO:0000318"/>
    <property type="project" value="GO_Central"/>
</dbReference>
<dbReference type="GO" id="GO:0008284">
    <property type="term" value="P:positive regulation of cell population proliferation"/>
    <property type="evidence" value="ECO:0000318"/>
    <property type="project" value="GO_Central"/>
</dbReference>
<dbReference type="GO" id="GO:0046427">
    <property type="term" value="P:positive regulation of receptor signaling pathway via JAK-STAT"/>
    <property type="evidence" value="ECO:0000318"/>
    <property type="project" value="GO_Central"/>
</dbReference>
<dbReference type="CDD" id="cd05860">
    <property type="entry name" value="IgI_4_SCFR"/>
    <property type="match status" value="1"/>
</dbReference>
<dbReference type="CDD" id="cd05104">
    <property type="entry name" value="PTKc_Kit"/>
    <property type="match status" value="1"/>
</dbReference>
<dbReference type="FunFam" id="1.10.510.10:FF:000177">
    <property type="entry name" value="Mast/stem cell growth factor receptor"/>
    <property type="match status" value="1"/>
</dbReference>
<dbReference type="FunFam" id="3.30.200.20:FF:000025">
    <property type="entry name" value="Platelet-derived growth factor receptor alpha"/>
    <property type="match status" value="1"/>
</dbReference>
<dbReference type="Gene3D" id="2.60.40.10">
    <property type="entry name" value="Immunoglobulins"/>
    <property type="match status" value="5"/>
</dbReference>
<dbReference type="Gene3D" id="3.30.200.20">
    <property type="entry name" value="Phosphorylase Kinase, domain 1"/>
    <property type="match status" value="1"/>
</dbReference>
<dbReference type="Gene3D" id="1.10.510.10">
    <property type="entry name" value="Transferase(Phosphotransferase) domain 1"/>
    <property type="match status" value="1"/>
</dbReference>
<dbReference type="InterPro" id="IPR007110">
    <property type="entry name" value="Ig-like_dom"/>
</dbReference>
<dbReference type="InterPro" id="IPR036179">
    <property type="entry name" value="Ig-like_dom_sf"/>
</dbReference>
<dbReference type="InterPro" id="IPR013783">
    <property type="entry name" value="Ig-like_fold"/>
</dbReference>
<dbReference type="InterPro" id="IPR003599">
    <property type="entry name" value="Ig_sub"/>
</dbReference>
<dbReference type="InterPro" id="IPR011009">
    <property type="entry name" value="Kinase-like_dom_sf"/>
</dbReference>
<dbReference type="InterPro" id="IPR000719">
    <property type="entry name" value="Prot_kinase_dom"/>
</dbReference>
<dbReference type="InterPro" id="IPR017441">
    <property type="entry name" value="Protein_kinase_ATP_BS"/>
</dbReference>
<dbReference type="InterPro" id="IPR050122">
    <property type="entry name" value="RTK"/>
</dbReference>
<dbReference type="InterPro" id="IPR027263">
    <property type="entry name" value="SCGF_receptor"/>
</dbReference>
<dbReference type="InterPro" id="IPR001245">
    <property type="entry name" value="Ser-Thr/Tyr_kinase_cat_dom"/>
</dbReference>
<dbReference type="InterPro" id="IPR008266">
    <property type="entry name" value="Tyr_kinase_AS"/>
</dbReference>
<dbReference type="InterPro" id="IPR020635">
    <property type="entry name" value="Tyr_kinase_cat_dom"/>
</dbReference>
<dbReference type="InterPro" id="IPR001824">
    <property type="entry name" value="Tyr_kinase_rcpt_3_CS"/>
</dbReference>
<dbReference type="PANTHER" id="PTHR24416:SF46">
    <property type="entry name" value="MAST_STEM CELL GROWTH FACTOR RECEPTOR KIT"/>
    <property type="match status" value="1"/>
</dbReference>
<dbReference type="PANTHER" id="PTHR24416">
    <property type="entry name" value="TYROSINE-PROTEIN KINASE RECEPTOR"/>
    <property type="match status" value="1"/>
</dbReference>
<dbReference type="Pfam" id="PF25305">
    <property type="entry name" value="Ig_PDGFR_d4"/>
    <property type="match status" value="1"/>
</dbReference>
<dbReference type="Pfam" id="PF07714">
    <property type="entry name" value="PK_Tyr_Ser-Thr"/>
    <property type="match status" value="1"/>
</dbReference>
<dbReference type="PIRSF" id="PIRSF500951">
    <property type="entry name" value="SCGF_recepter"/>
    <property type="match status" value="1"/>
</dbReference>
<dbReference type="PIRSF" id="PIRSF000615">
    <property type="entry name" value="TyrPK_CSF1-R"/>
    <property type="match status" value="1"/>
</dbReference>
<dbReference type="SMART" id="SM00409">
    <property type="entry name" value="IG"/>
    <property type="match status" value="4"/>
</dbReference>
<dbReference type="SMART" id="SM00219">
    <property type="entry name" value="TyrKc"/>
    <property type="match status" value="1"/>
</dbReference>
<dbReference type="SUPFAM" id="SSF48726">
    <property type="entry name" value="Immunoglobulin"/>
    <property type="match status" value="5"/>
</dbReference>
<dbReference type="SUPFAM" id="SSF56112">
    <property type="entry name" value="Protein kinase-like (PK-like)"/>
    <property type="match status" value="1"/>
</dbReference>
<dbReference type="PROSITE" id="PS50835">
    <property type="entry name" value="IG_LIKE"/>
    <property type="match status" value="2"/>
</dbReference>
<dbReference type="PROSITE" id="PS00107">
    <property type="entry name" value="PROTEIN_KINASE_ATP"/>
    <property type="match status" value="1"/>
</dbReference>
<dbReference type="PROSITE" id="PS50011">
    <property type="entry name" value="PROTEIN_KINASE_DOM"/>
    <property type="match status" value="1"/>
</dbReference>
<dbReference type="PROSITE" id="PS00109">
    <property type="entry name" value="PROTEIN_KINASE_TYR"/>
    <property type="match status" value="1"/>
</dbReference>
<dbReference type="PROSITE" id="PS00240">
    <property type="entry name" value="RECEPTOR_TYR_KIN_III"/>
    <property type="match status" value="1"/>
</dbReference>
<organism>
    <name type="scientific">Xenopus laevis</name>
    <name type="common">African clawed frog</name>
    <dbReference type="NCBI Taxonomy" id="8355"/>
    <lineage>
        <taxon>Eukaryota</taxon>
        <taxon>Metazoa</taxon>
        <taxon>Chordata</taxon>
        <taxon>Craniata</taxon>
        <taxon>Vertebrata</taxon>
        <taxon>Euteleostomi</taxon>
        <taxon>Amphibia</taxon>
        <taxon>Batrachia</taxon>
        <taxon>Anura</taxon>
        <taxon>Pipoidea</taxon>
        <taxon>Pipidae</taxon>
        <taxon>Xenopodinae</taxon>
        <taxon>Xenopus</taxon>
        <taxon>Xenopus</taxon>
    </lineage>
</organism>
<comment type="function">
    <text evidence="1">Tyrosine-protein kinase that acts as a cell-surface receptor for the cytokine kitlg/scf and plays an essential role in the regulation of cell survival and proliferation, hematopoiesis, stem cell maintenance, gametogenesis, mast cell development, migration and function, and in melanogenesis.</text>
</comment>
<comment type="catalytic activity">
    <reaction evidence="5">
        <text>L-tyrosyl-[protein] + ATP = O-phospho-L-tyrosyl-[protein] + ADP + H(+)</text>
        <dbReference type="Rhea" id="RHEA:10596"/>
        <dbReference type="Rhea" id="RHEA-COMP:10136"/>
        <dbReference type="Rhea" id="RHEA-COMP:20101"/>
        <dbReference type="ChEBI" id="CHEBI:15378"/>
        <dbReference type="ChEBI" id="CHEBI:30616"/>
        <dbReference type="ChEBI" id="CHEBI:46858"/>
        <dbReference type="ChEBI" id="CHEBI:61978"/>
        <dbReference type="ChEBI" id="CHEBI:456216"/>
        <dbReference type="EC" id="2.7.10.1"/>
    </reaction>
</comment>
<comment type="subcellular location">
    <subcellularLocation>
        <location evidence="7">Cell membrane</location>
        <topology evidence="7">Single-pass type I membrane protein</topology>
    </subcellularLocation>
</comment>
<comment type="tissue specificity">
    <text>Expressed in a migratory stem cell population.</text>
</comment>
<comment type="developmental stage">
    <text evidence="6">During embryogenesis, maternal transcripts levels are very low through cleavage and blastula stages. Zygotic transcripts are first detected in the early gastrula at stage 10. Transcripts levels increase through tailbud and tadpole stages. At stages 31/32, expression is seen at the surface of the embryo in a line ventral to the posterior edge of the optic cup. At stages 33/34, two short lines of cells exist running ventrally from the anterior edge of the otic vesicle. At stages 35/36, expression is seen in cells near the cement gland and in a patch of cells located posterior to the gill arches, and just beneath or within the inner layer of the epidermis. At stages 37/38, expression forms a ribbon on either side of the embryo. At stages 40, a second line runs caudally along the flank of the embryo. By stage 42, extension occurs and a line is observed ventro-caudally around the anus.</text>
</comment>
<comment type="PTM">
    <text evidence="1">Ubiquitinated. Rapidly ubiquitinated after autophosphorylation induced by kitlg/scf binding, leading to internalization and degradation.</text>
</comment>
<comment type="PTM">
    <text evidence="1">Autophosphorylated on tyrosine residues. Phosphorylated tyrosine residues are important for interaction with specific binding partners (By similarity).</text>
</comment>
<comment type="similarity">
    <text evidence="4">Belongs to the protein kinase superfamily. Tyr protein kinase family. CSF-1/PDGF receptor subfamily.</text>
</comment>
<name>KIT_XENLA</name>
<keyword id="KW-0067">ATP-binding</keyword>
<keyword id="KW-1003">Cell membrane</keyword>
<keyword id="KW-1015">Disulfide bond</keyword>
<keyword id="KW-0325">Glycoprotein</keyword>
<keyword id="KW-0393">Immunoglobulin domain</keyword>
<keyword id="KW-0418">Kinase</keyword>
<keyword id="KW-0460">Magnesium</keyword>
<keyword id="KW-0472">Membrane</keyword>
<keyword id="KW-0479">Metal-binding</keyword>
<keyword id="KW-0547">Nucleotide-binding</keyword>
<keyword id="KW-0597">Phosphoprotein</keyword>
<keyword id="KW-0675">Receptor</keyword>
<keyword id="KW-1185">Reference proteome</keyword>
<keyword id="KW-0677">Repeat</keyword>
<keyword id="KW-0732">Signal</keyword>
<keyword id="KW-0808">Transferase</keyword>
<keyword id="KW-0812">Transmembrane</keyword>
<keyword id="KW-1133">Transmembrane helix</keyword>
<keyword id="KW-0829">Tyrosine-protein kinase</keyword>
<keyword id="KW-0832">Ubl conjugation</keyword>
<sequence length="954" mass="106860">MSWTYLLMLLFLLPYTGDAVPKINDGEDRVTVNVGDKVSLECRDAHLVTLAFQKSGLMKKPRDLKSRPLNNSETDQFFVIIKADLRHIGRYICTNTETQENTSVSLFVKDPARPFLDIPFIDVTEGADTVGMCFPTDPDMDIAIEKCDGSPLPENFTFTTDIEAGITIKTVQLAFDSCYVCSGNKSGTVKKSSTFSIHVKPVPKKVPTVFLSKSRQLVKTGEPFEVTCAVLDVFSTVKAQWLDVKEGVTKQANFRSSNVFSYNLTLKSDGVPYSESRTFTCQAENAIGQVNATFTLDVIDVGYVNLTVLENTTISVNAGDNLVLKVYIDAYPHPDDGVWTYFNETLLNTSDHYVATKDEGNNRYVSELHLIRLKGTEKGVYTFYTTNSDDDASVSFNIQVKTRPEILIAERTSEGTLQCVATGFPVPAIQWYFCPGSEQRCTDYPPLSPVNEKFIQENSSLGRIVVESTIDVNDLKKNGTVQCVASNEVESAYSVFSFAIKEKLRTHTLFTPLLIGFIAAAGLMCIAVAVLMYKYLQKPKYEIQWKVVEEINGNNYVYIDPTQLPYDNKWEFPRDRLCFGKILGAGAFGKVVEATAYGLLKEDSRLTVAVKMLKPSAHSTEREALMSELKVLSYLGHHKNIVNLLGACTVGGPTLVITEYCCYGDLLNYLRRKRDSFICPKFEDNSEAALYKNLLNTRDMGCEGMSEYIDMKPAVSYVVPTKTDKRRSGSFGDQDVSVSIPEEDDLALDTEDLINFSYQVAQGMNFLASKNCIHRDLAARNILLTHGRITKICDFGLARDIRNDSNYVVKGNARLPVKWMAPESIFHCVYTFESDVWSYGILLWEIFSLGSSPYPRIPVDSKFYKMIKDGYRMMSPECAPLEMYEIMRSCWNSDPLKRPTFKQIVQMVEQQLSDSKGNTPLPYPVSHVPLDHAVRINSVGSSTSSQPLLTNSDR</sequence>